<proteinExistence type="inferred from homology"/>
<feature type="chain" id="PRO_0000315567" description="Putative manganese efflux pump MntP">
    <location>
        <begin position="1"/>
        <end position="188"/>
    </location>
</feature>
<feature type="transmembrane region" description="Helical" evidence="1">
    <location>
        <begin position="3"/>
        <end position="23"/>
    </location>
</feature>
<feature type="transmembrane region" description="Helical" evidence="1">
    <location>
        <begin position="41"/>
        <end position="61"/>
    </location>
</feature>
<feature type="transmembrane region" description="Helical" evidence="1">
    <location>
        <begin position="62"/>
        <end position="82"/>
    </location>
</feature>
<feature type="transmembrane region" description="Helical" evidence="1">
    <location>
        <begin position="107"/>
        <end position="129"/>
    </location>
</feature>
<feature type="transmembrane region" description="Helical" evidence="1">
    <location>
        <begin position="143"/>
        <end position="163"/>
    </location>
</feature>
<feature type="transmembrane region" description="Helical" evidence="1">
    <location>
        <begin position="168"/>
        <end position="188"/>
    </location>
</feature>
<evidence type="ECO:0000255" key="1">
    <source>
        <dbReference type="HAMAP-Rule" id="MF_01521"/>
    </source>
</evidence>
<evidence type="ECO:0000305" key="2"/>
<gene>
    <name evidence="1" type="primary">mntP</name>
    <name type="ordered locus">KPN78578_23020</name>
    <name type="ORF">KPN_02337</name>
</gene>
<dbReference type="EMBL" id="CP000647">
    <property type="protein sequence ID" value="ABR77763.1"/>
    <property type="status" value="ALT_INIT"/>
    <property type="molecule type" value="Genomic_DNA"/>
</dbReference>
<dbReference type="RefSeq" id="WP_002910921.1">
    <property type="nucleotide sequence ID" value="NC_009648.1"/>
</dbReference>
<dbReference type="STRING" id="272620.KPN_02337"/>
<dbReference type="PaxDb" id="272620-KPN_02337"/>
<dbReference type="EnsemblBacteria" id="ABR77763">
    <property type="protein sequence ID" value="ABR77763"/>
    <property type="gene ID" value="KPN_02337"/>
</dbReference>
<dbReference type="KEGG" id="kpn:KPN_02337"/>
<dbReference type="HOGENOM" id="CLU_096410_0_0_6"/>
<dbReference type="Proteomes" id="UP000000265">
    <property type="component" value="Chromosome"/>
</dbReference>
<dbReference type="GO" id="GO:0005886">
    <property type="term" value="C:plasma membrane"/>
    <property type="evidence" value="ECO:0007669"/>
    <property type="project" value="UniProtKB-SubCell"/>
</dbReference>
<dbReference type="GO" id="GO:0005384">
    <property type="term" value="F:manganese ion transmembrane transporter activity"/>
    <property type="evidence" value="ECO:0007669"/>
    <property type="project" value="UniProtKB-UniRule"/>
</dbReference>
<dbReference type="HAMAP" id="MF_01521">
    <property type="entry name" value="MntP_pump"/>
    <property type="match status" value="1"/>
</dbReference>
<dbReference type="InterPro" id="IPR003810">
    <property type="entry name" value="Mntp/YtaF"/>
</dbReference>
<dbReference type="InterPro" id="IPR022929">
    <property type="entry name" value="Put_MntP"/>
</dbReference>
<dbReference type="NCBIfam" id="NF008546">
    <property type="entry name" value="PRK11469.1"/>
    <property type="match status" value="1"/>
</dbReference>
<dbReference type="PANTHER" id="PTHR35529">
    <property type="entry name" value="MANGANESE EFFLUX PUMP MNTP-RELATED"/>
    <property type="match status" value="1"/>
</dbReference>
<dbReference type="PANTHER" id="PTHR35529:SF1">
    <property type="entry name" value="MANGANESE EFFLUX PUMP MNTP-RELATED"/>
    <property type="match status" value="1"/>
</dbReference>
<dbReference type="Pfam" id="PF02659">
    <property type="entry name" value="Mntp"/>
    <property type="match status" value="1"/>
</dbReference>
<sequence>MNLSATILLAFGMSMDAFAASIGKGATLHKPKFSEAVRTGLIFGAIETLTPLVGWGLGMLASQFILEWNHWIAFILLVFLGGRMIVEGFRGDSDEACEAPHRHGFWLLVTTAFATSLDAMAVGVGLAFLQVSIVTTALAIGCATFIMSTLGMMVGRFIGPLLGKRAEILGGIVLIGIGSEILWSHFAG</sequence>
<comment type="function">
    <text evidence="1">Probably functions as a manganese efflux pump.</text>
</comment>
<comment type="subcellular location">
    <subcellularLocation>
        <location evidence="1">Cell inner membrane</location>
        <topology evidence="1">Multi-pass membrane protein</topology>
    </subcellularLocation>
</comment>
<comment type="similarity">
    <text evidence="1">Belongs to the MntP (TC 9.B.29) family.</text>
</comment>
<comment type="sequence caution" evidence="2">
    <conflict type="erroneous initiation">
        <sequence resource="EMBL-CDS" id="ABR77763"/>
    </conflict>
</comment>
<keyword id="KW-0997">Cell inner membrane</keyword>
<keyword id="KW-1003">Cell membrane</keyword>
<keyword id="KW-0406">Ion transport</keyword>
<keyword id="KW-0464">Manganese</keyword>
<keyword id="KW-0472">Membrane</keyword>
<keyword id="KW-0812">Transmembrane</keyword>
<keyword id="KW-1133">Transmembrane helix</keyword>
<keyword id="KW-0813">Transport</keyword>
<accession>A6TAZ2</accession>
<organism>
    <name type="scientific">Klebsiella pneumoniae subsp. pneumoniae (strain ATCC 700721 / MGH 78578)</name>
    <dbReference type="NCBI Taxonomy" id="272620"/>
    <lineage>
        <taxon>Bacteria</taxon>
        <taxon>Pseudomonadati</taxon>
        <taxon>Pseudomonadota</taxon>
        <taxon>Gammaproteobacteria</taxon>
        <taxon>Enterobacterales</taxon>
        <taxon>Enterobacteriaceae</taxon>
        <taxon>Klebsiella/Raoultella group</taxon>
        <taxon>Klebsiella</taxon>
        <taxon>Klebsiella pneumoniae complex</taxon>
    </lineage>
</organism>
<protein>
    <recommendedName>
        <fullName evidence="1">Putative manganese efflux pump MntP</fullName>
    </recommendedName>
</protein>
<name>MNTP_KLEP7</name>
<reference key="1">
    <citation type="submission" date="2006-09" db="EMBL/GenBank/DDBJ databases">
        <authorList>
            <consortium name="The Klebsiella pneumonia Genome Sequencing Project"/>
            <person name="McClelland M."/>
            <person name="Sanderson E.K."/>
            <person name="Spieth J."/>
            <person name="Clifton W.S."/>
            <person name="Latreille P."/>
            <person name="Sabo A."/>
            <person name="Pepin K."/>
            <person name="Bhonagiri V."/>
            <person name="Porwollik S."/>
            <person name="Ali J."/>
            <person name="Wilson R.K."/>
        </authorList>
    </citation>
    <scope>NUCLEOTIDE SEQUENCE [LARGE SCALE GENOMIC DNA]</scope>
    <source>
        <strain>ATCC 700721 / MGH 78578</strain>
    </source>
</reference>